<feature type="chain" id="PRO_0000177003" description="Transcription elongation factor GreA">
    <location>
        <begin position="1"/>
        <end position="158"/>
    </location>
</feature>
<reference key="1">
    <citation type="journal article" date="2001" name="Nature">
        <title>Genome sequence of Yersinia pestis, the causative agent of plague.</title>
        <authorList>
            <person name="Parkhill J."/>
            <person name="Wren B.W."/>
            <person name="Thomson N.R."/>
            <person name="Titball R.W."/>
            <person name="Holden M.T.G."/>
            <person name="Prentice M.B."/>
            <person name="Sebaihia M."/>
            <person name="James K.D."/>
            <person name="Churcher C.M."/>
            <person name="Mungall K.L."/>
            <person name="Baker S."/>
            <person name="Basham D."/>
            <person name="Bentley S.D."/>
            <person name="Brooks K."/>
            <person name="Cerdeno-Tarraga A.-M."/>
            <person name="Chillingworth T."/>
            <person name="Cronin A."/>
            <person name="Davies R.M."/>
            <person name="Davis P."/>
            <person name="Dougan G."/>
            <person name="Feltwell T."/>
            <person name="Hamlin N."/>
            <person name="Holroyd S."/>
            <person name="Jagels K."/>
            <person name="Karlyshev A.V."/>
            <person name="Leather S."/>
            <person name="Moule S."/>
            <person name="Oyston P.C.F."/>
            <person name="Quail M.A."/>
            <person name="Rutherford K.M."/>
            <person name="Simmonds M."/>
            <person name="Skelton J."/>
            <person name="Stevens K."/>
            <person name="Whitehead S."/>
            <person name="Barrell B.G."/>
        </authorList>
    </citation>
    <scope>NUCLEOTIDE SEQUENCE [LARGE SCALE GENOMIC DNA]</scope>
    <source>
        <strain>CO-92 / Biovar Orientalis</strain>
    </source>
</reference>
<reference key="2">
    <citation type="journal article" date="2002" name="J. Bacteriol.">
        <title>Genome sequence of Yersinia pestis KIM.</title>
        <authorList>
            <person name="Deng W."/>
            <person name="Burland V."/>
            <person name="Plunkett G. III"/>
            <person name="Boutin A."/>
            <person name="Mayhew G.F."/>
            <person name="Liss P."/>
            <person name="Perna N.T."/>
            <person name="Rose D.J."/>
            <person name="Mau B."/>
            <person name="Zhou S."/>
            <person name="Schwartz D.C."/>
            <person name="Fetherston J.D."/>
            <person name="Lindler L.E."/>
            <person name="Brubaker R.R."/>
            <person name="Plano G.V."/>
            <person name="Straley S.C."/>
            <person name="McDonough K.A."/>
            <person name="Nilles M.L."/>
            <person name="Matson J.S."/>
            <person name="Blattner F.R."/>
            <person name="Perry R.D."/>
        </authorList>
    </citation>
    <scope>NUCLEOTIDE SEQUENCE [LARGE SCALE GENOMIC DNA]</scope>
    <source>
        <strain>KIM10+ / Biovar Mediaevalis</strain>
    </source>
</reference>
<reference key="3">
    <citation type="journal article" date="2004" name="DNA Res.">
        <title>Complete genome sequence of Yersinia pestis strain 91001, an isolate avirulent to humans.</title>
        <authorList>
            <person name="Song Y."/>
            <person name="Tong Z."/>
            <person name="Wang J."/>
            <person name="Wang L."/>
            <person name="Guo Z."/>
            <person name="Han Y."/>
            <person name="Zhang J."/>
            <person name="Pei D."/>
            <person name="Zhou D."/>
            <person name="Qin H."/>
            <person name="Pang X."/>
            <person name="Han Y."/>
            <person name="Zhai J."/>
            <person name="Li M."/>
            <person name="Cui B."/>
            <person name="Qi Z."/>
            <person name="Jin L."/>
            <person name="Dai R."/>
            <person name="Chen F."/>
            <person name="Li S."/>
            <person name="Ye C."/>
            <person name="Du Z."/>
            <person name="Lin W."/>
            <person name="Wang J."/>
            <person name="Yu J."/>
            <person name="Yang H."/>
            <person name="Wang J."/>
            <person name="Huang P."/>
            <person name="Yang R."/>
        </authorList>
    </citation>
    <scope>NUCLEOTIDE SEQUENCE [LARGE SCALE GENOMIC DNA]</scope>
    <source>
        <strain>91001 / Biovar Mediaevalis</strain>
    </source>
</reference>
<comment type="function">
    <text evidence="1">Necessary for efficient RNA polymerase transcription elongation past template-encoded arresting sites. The arresting sites in DNA have the property of trapping a certain fraction of elongating RNA polymerases that pass through, resulting in locked ternary complexes. Cleavage of the nascent transcript by cleavage factors such as GreA or GreB allows the resumption of elongation from the new 3'terminus. GreA releases sequences of 2 to 3 nucleotides.</text>
</comment>
<comment type="similarity">
    <text evidence="1">Belongs to the GreA/GreB family.</text>
</comment>
<proteinExistence type="inferred from homology"/>
<dbReference type="EMBL" id="AL590842">
    <property type="protein sequence ID" value="CAL22093.1"/>
    <property type="molecule type" value="Genomic_DNA"/>
</dbReference>
<dbReference type="EMBL" id="AE009952">
    <property type="protein sequence ID" value="AAM84267.1"/>
    <property type="molecule type" value="Genomic_DNA"/>
</dbReference>
<dbReference type="EMBL" id="AE017042">
    <property type="protein sequence ID" value="AAS60848.1"/>
    <property type="molecule type" value="Genomic_DNA"/>
</dbReference>
<dbReference type="PIR" id="AB0426">
    <property type="entry name" value="AB0426"/>
</dbReference>
<dbReference type="RefSeq" id="WP_002210184.1">
    <property type="nucleotide sequence ID" value="NZ_WUCM01000036.1"/>
</dbReference>
<dbReference type="RefSeq" id="YP_002348394.1">
    <property type="nucleotide sequence ID" value="NC_003143.1"/>
</dbReference>
<dbReference type="SMR" id="Q8ZBB3"/>
<dbReference type="STRING" id="214092.YPO3505"/>
<dbReference type="PaxDb" id="214092-YPO3505"/>
<dbReference type="DNASU" id="1145626"/>
<dbReference type="EnsemblBacteria" id="AAS60848">
    <property type="protein sequence ID" value="AAS60848"/>
    <property type="gene ID" value="YP_0578"/>
</dbReference>
<dbReference type="GeneID" id="57975209"/>
<dbReference type="KEGG" id="ype:YPO3505"/>
<dbReference type="KEGG" id="ypk:y0679"/>
<dbReference type="KEGG" id="ypm:YP_0578"/>
<dbReference type="PATRIC" id="fig|214092.21.peg.3999"/>
<dbReference type="eggNOG" id="COG0782">
    <property type="taxonomic scope" value="Bacteria"/>
</dbReference>
<dbReference type="HOGENOM" id="CLU_101379_2_0_6"/>
<dbReference type="OMA" id="TWLTQEA"/>
<dbReference type="OrthoDB" id="9808774at2"/>
<dbReference type="Proteomes" id="UP000000815">
    <property type="component" value="Chromosome"/>
</dbReference>
<dbReference type="Proteomes" id="UP000001019">
    <property type="component" value="Chromosome"/>
</dbReference>
<dbReference type="Proteomes" id="UP000002490">
    <property type="component" value="Chromosome"/>
</dbReference>
<dbReference type="GO" id="GO:0003677">
    <property type="term" value="F:DNA binding"/>
    <property type="evidence" value="ECO:0007669"/>
    <property type="project" value="UniProtKB-UniRule"/>
</dbReference>
<dbReference type="GO" id="GO:0070063">
    <property type="term" value="F:RNA polymerase binding"/>
    <property type="evidence" value="ECO:0007669"/>
    <property type="project" value="InterPro"/>
</dbReference>
<dbReference type="GO" id="GO:0006354">
    <property type="term" value="P:DNA-templated transcription elongation"/>
    <property type="evidence" value="ECO:0000318"/>
    <property type="project" value="GO_Central"/>
</dbReference>
<dbReference type="GO" id="GO:0032784">
    <property type="term" value="P:regulation of DNA-templated transcription elongation"/>
    <property type="evidence" value="ECO:0007669"/>
    <property type="project" value="UniProtKB-UniRule"/>
</dbReference>
<dbReference type="FunFam" id="1.10.287.180:FF:000001">
    <property type="entry name" value="Transcription elongation factor GreA"/>
    <property type="match status" value="1"/>
</dbReference>
<dbReference type="FunFam" id="3.10.50.30:FF:000001">
    <property type="entry name" value="Transcription elongation factor GreA"/>
    <property type="match status" value="1"/>
</dbReference>
<dbReference type="Gene3D" id="3.10.50.30">
    <property type="entry name" value="Transcription elongation factor, GreA/GreB, C-terminal domain"/>
    <property type="match status" value="1"/>
</dbReference>
<dbReference type="Gene3D" id="1.10.287.180">
    <property type="entry name" value="Transcription elongation factor, GreA/GreB, N-terminal domain"/>
    <property type="match status" value="1"/>
</dbReference>
<dbReference type="HAMAP" id="MF_00105">
    <property type="entry name" value="GreA_GreB"/>
    <property type="match status" value="1"/>
</dbReference>
<dbReference type="InterPro" id="IPR036953">
    <property type="entry name" value="GreA/GreB_C_sf"/>
</dbReference>
<dbReference type="InterPro" id="IPR018151">
    <property type="entry name" value="TF_GreA/GreB_CS"/>
</dbReference>
<dbReference type="InterPro" id="IPR006359">
    <property type="entry name" value="Tscrpt_elong_fac_GreA"/>
</dbReference>
<dbReference type="InterPro" id="IPR028624">
    <property type="entry name" value="Tscrpt_elong_fac_GreA/B"/>
</dbReference>
<dbReference type="InterPro" id="IPR001437">
    <property type="entry name" value="Tscrpt_elong_fac_GreA/B_C"/>
</dbReference>
<dbReference type="InterPro" id="IPR023459">
    <property type="entry name" value="Tscrpt_elong_fac_GreA/B_fam"/>
</dbReference>
<dbReference type="InterPro" id="IPR022691">
    <property type="entry name" value="Tscrpt_elong_fac_GreA/B_N"/>
</dbReference>
<dbReference type="InterPro" id="IPR036805">
    <property type="entry name" value="Tscrpt_elong_fac_GreA/B_N_sf"/>
</dbReference>
<dbReference type="NCBIfam" id="TIGR01462">
    <property type="entry name" value="greA"/>
    <property type="match status" value="1"/>
</dbReference>
<dbReference type="NCBIfam" id="NF001261">
    <property type="entry name" value="PRK00226.1-2"/>
    <property type="match status" value="1"/>
</dbReference>
<dbReference type="NCBIfam" id="NF001263">
    <property type="entry name" value="PRK00226.1-4"/>
    <property type="match status" value="1"/>
</dbReference>
<dbReference type="NCBIfam" id="NF001264">
    <property type="entry name" value="PRK00226.1-5"/>
    <property type="match status" value="1"/>
</dbReference>
<dbReference type="PANTHER" id="PTHR30437">
    <property type="entry name" value="TRANSCRIPTION ELONGATION FACTOR GREA"/>
    <property type="match status" value="1"/>
</dbReference>
<dbReference type="PANTHER" id="PTHR30437:SF4">
    <property type="entry name" value="TRANSCRIPTION ELONGATION FACTOR GREA"/>
    <property type="match status" value="1"/>
</dbReference>
<dbReference type="Pfam" id="PF01272">
    <property type="entry name" value="GreA_GreB"/>
    <property type="match status" value="1"/>
</dbReference>
<dbReference type="Pfam" id="PF03449">
    <property type="entry name" value="GreA_GreB_N"/>
    <property type="match status" value="1"/>
</dbReference>
<dbReference type="PIRSF" id="PIRSF006092">
    <property type="entry name" value="GreA_GreB"/>
    <property type="match status" value="1"/>
</dbReference>
<dbReference type="SUPFAM" id="SSF54534">
    <property type="entry name" value="FKBP-like"/>
    <property type="match status" value="1"/>
</dbReference>
<dbReference type="SUPFAM" id="SSF46557">
    <property type="entry name" value="GreA transcript cleavage protein, N-terminal domain"/>
    <property type="match status" value="1"/>
</dbReference>
<dbReference type="PROSITE" id="PS00829">
    <property type="entry name" value="GREAB_1"/>
    <property type="match status" value="1"/>
</dbReference>
<dbReference type="PROSITE" id="PS00830">
    <property type="entry name" value="GREAB_2"/>
    <property type="match status" value="1"/>
</dbReference>
<gene>
    <name evidence="1" type="primary">greA</name>
    <name type="ordered locus">YPO3505</name>
    <name type="ordered locus">y0679</name>
    <name type="ordered locus">YP_0578</name>
</gene>
<keyword id="KW-0238">DNA-binding</keyword>
<keyword id="KW-1185">Reference proteome</keyword>
<keyword id="KW-0804">Transcription</keyword>
<keyword id="KW-0805">Transcription regulation</keyword>
<name>GREA_YERPE</name>
<accession>Q8ZBB3</accession>
<accession>Q0WBE4</accession>
<evidence type="ECO:0000255" key="1">
    <source>
        <dbReference type="HAMAP-Rule" id="MF_00105"/>
    </source>
</evidence>
<sequence>MKQIPMTVRGADKLREELDYLKGVRRPKIISDIADAREHGDLKENAEYHAAREQQGFCEGRIQEIEAKLSNAQVIDITKMPNNGRVIFGATVRVLNLNTEEEQNYRIVGDDEADFKQNLISVNSPIARGLIGKEVDDVVVIHTPGGEVEYEILSVEYV</sequence>
<protein>
    <recommendedName>
        <fullName evidence="1">Transcription elongation factor GreA</fullName>
    </recommendedName>
    <alternativeName>
        <fullName evidence="1">Transcript cleavage factor GreA</fullName>
    </alternativeName>
</protein>
<organism>
    <name type="scientific">Yersinia pestis</name>
    <dbReference type="NCBI Taxonomy" id="632"/>
    <lineage>
        <taxon>Bacteria</taxon>
        <taxon>Pseudomonadati</taxon>
        <taxon>Pseudomonadota</taxon>
        <taxon>Gammaproteobacteria</taxon>
        <taxon>Enterobacterales</taxon>
        <taxon>Yersiniaceae</taxon>
        <taxon>Yersinia</taxon>
    </lineage>
</organism>